<reference key="1">
    <citation type="journal article" date="1999" name="J. Biochem.">
        <title>Molecular cloning and splicing isoforms of mouse p144, a homologue of CA150.</title>
        <authorList>
            <person name="Simada M."/>
            <person name="Saito M."/>
            <person name="Katakai T."/>
            <person name="Shimizu A."/>
            <person name="Ichimura T."/>
            <person name="Omata S."/>
            <person name="Horigome T."/>
        </authorList>
    </citation>
    <scope>NUCLEOTIDE SEQUENCE [MRNA] (ISOFORM 3)</scope>
    <scope>ALTERNATIVE SPLICING</scope>
    <source>
        <tissue>Liver</tissue>
    </source>
</reference>
<reference key="2">
    <citation type="journal article" date="2004" name="Genome Res.">
        <title>The status, quality, and expansion of the NIH full-length cDNA project: the Mammalian Gene Collection (MGC).</title>
        <authorList>
            <consortium name="The MGC Project Team"/>
        </authorList>
    </citation>
    <scope>NUCLEOTIDE SEQUENCE [LARGE SCALE MRNA] (ISOFORM 2)</scope>
    <scope>VARIANT 184-GLN-ALA-185 DEL</scope>
    <source>
        <strain>FVB/N</strain>
        <tissue>Mammary tumor</tissue>
    </source>
</reference>
<reference key="3">
    <citation type="journal article" date="1996" name="EMBO J.">
        <title>Formin binding proteins bear WWP/WW domains that bind proline-rich peptides and functionally resemble SH3 domains.</title>
        <authorList>
            <person name="Chan D.C."/>
            <person name="Bedford M.T."/>
            <person name="Leder P."/>
        </authorList>
    </citation>
    <scope>NUCLEOTIDE SEQUENCE [MRNA] OF 437-462</scope>
    <scope>INTERACTION WITH FORMIN</scope>
    <source>
        <strain>FVB/NJ</strain>
        <tissue>Embryo</tissue>
    </source>
</reference>
<reference key="4">
    <citation type="journal article" date="2005" name="Science">
        <title>The transcriptional landscape of the mammalian genome.</title>
        <authorList>
            <person name="Carninci P."/>
            <person name="Kasukawa T."/>
            <person name="Katayama S."/>
            <person name="Gough J."/>
            <person name="Frith M.C."/>
            <person name="Maeda N."/>
            <person name="Oyama R."/>
            <person name="Ravasi T."/>
            <person name="Lenhard B."/>
            <person name="Wells C."/>
            <person name="Kodzius R."/>
            <person name="Shimokawa K."/>
            <person name="Bajic V.B."/>
            <person name="Brenner S.E."/>
            <person name="Batalov S."/>
            <person name="Forrest A.R."/>
            <person name="Zavolan M."/>
            <person name="Davis M.J."/>
            <person name="Wilming L.G."/>
            <person name="Aidinis V."/>
            <person name="Allen J.E."/>
            <person name="Ambesi-Impiombato A."/>
            <person name="Apweiler R."/>
            <person name="Aturaliya R.N."/>
            <person name="Bailey T.L."/>
            <person name="Bansal M."/>
            <person name="Baxter L."/>
            <person name="Beisel K.W."/>
            <person name="Bersano T."/>
            <person name="Bono H."/>
            <person name="Chalk A.M."/>
            <person name="Chiu K.P."/>
            <person name="Choudhary V."/>
            <person name="Christoffels A."/>
            <person name="Clutterbuck D.R."/>
            <person name="Crowe M.L."/>
            <person name="Dalla E."/>
            <person name="Dalrymple B.P."/>
            <person name="de Bono B."/>
            <person name="Della Gatta G."/>
            <person name="di Bernardo D."/>
            <person name="Down T."/>
            <person name="Engstrom P."/>
            <person name="Fagiolini M."/>
            <person name="Faulkner G."/>
            <person name="Fletcher C.F."/>
            <person name="Fukushima T."/>
            <person name="Furuno M."/>
            <person name="Futaki S."/>
            <person name="Gariboldi M."/>
            <person name="Georgii-Hemming P."/>
            <person name="Gingeras T.R."/>
            <person name="Gojobori T."/>
            <person name="Green R.E."/>
            <person name="Gustincich S."/>
            <person name="Harbers M."/>
            <person name="Hayashi Y."/>
            <person name="Hensch T.K."/>
            <person name="Hirokawa N."/>
            <person name="Hill D."/>
            <person name="Huminiecki L."/>
            <person name="Iacono M."/>
            <person name="Ikeo K."/>
            <person name="Iwama A."/>
            <person name="Ishikawa T."/>
            <person name="Jakt M."/>
            <person name="Kanapin A."/>
            <person name="Katoh M."/>
            <person name="Kawasawa Y."/>
            <person name="Kelso J."/>
            <person name="Kitamura H."/>
            <person name="Kitano H."/>
            <person name="Kollias G."/>
            <person name="Krishnan S.P."/>
            <person name="Kruger A."/>
            <person name="Kummerfeld S.K."/>
            <person name="Kurochkin I.V."/>
            <person name="Lareau L.F."/>
            <person name="Lazarevic D."/>
            <person name="Lipovich L."/>
            <person name="Liu J."/>
            <person name="Liuni S."/>
            <person name="McWilliam S."/>
            <person name="Madan Babu M."/>
            <person name="Madera M."/>
            <person name="Marchionni L."/>
            <person name="Matsuda H."/>
            <person name="Matsuzawa S."/>
            <person name="Miki H."/>
            <person name="Mignone F."/>
            <person name="Miyake S."/>
            <person name="Morris K."/>
            <person name="Mottagui-Tabar S."/>
            <person name="Mulder N."/>
            <person name="Nakano N."/>
            <person name="Nakauchi H."/>
            <person name="Ng P."/>
            <person name="Nilsson R."/>
            <person name="Nishiguchi S."/>
            <person name="Nishikawa S."/>
            <person name="Nori F."/>
            <person name="Ohara O."/>
            <person name="Okazaki Y."/>
            <person name="Orlando V."/>
            <person name="Pang K.C."/>
            <person name="Pavan W.J."/>
            <person name="Pavesi G."/>
            <person name="Pesole G."/>
            <person name="Petrovsky N."/>
            <person name="Piazza S."/>
            <person name="Reed J."/>
            <person name="Reid J.F."/>
            <person name="Ring B.Z."/>
            <person name="Ringwald M."/>
            <person name="Rost B."/>
            <person name="Ruan Y."/>
            <person name="Salzberg S.L."/>
            <person name="Sandelin A."/>
            <person name="Schneider C."/>
            <person name="Schoenbach C."/>
            <person name="Sekiguchi K."/>
            <person name="Semple C.A."/>
            <person name="Seno S."/>
            <person name="Sessa L."/>
            <person name="Sheng Y."/>
            <person name="Shibata Y."/>
            <person name="Shimada H."/>
            <person name="Shimada K."/>
            <person name="Silva D."/>
            <person name="Sinclair B."/>
            <person name="Sperling S."/>
            <person name="Stupka E."/>
            <person name="Sugiura K."/>
            <person name="Sultana R."/>
            <person name="Takenaka Y."/>
            <person name="Taki K."/>
            <person name="Tammoja K."/>
            <person name="Tan S.L."/>
            <person name="Tang S."/>
            <person name="Taylor M.S."/>
            <person name="Tegner J."/>
            <person name="Teichmann S.A."/>
            <person name="Ueda H.R."/>
            <person name="van Nimwegen E."/>
            <person name="Verardo R."/>
            <person name="Wei C.L."/>
            <person name="Yagi K."/>
            <person name="Yamanishi H."/>
            <person name="Zabarovsky E."/>
            <person name="Zhu S."/>
            <person name="Zimmer A."/>
            <person name="Hide W."/>
            <person name="Bult C."/>
            <person name="Grimmond S.M."/>
            <person name="Teasdale R.D."/>
            <person name="Liu E.T."/>
            <person name="Brusic V."/>
            <person name="Quackenbush J."/>
            <person name="Wahlestedt C."/>
            <person name="Mattick J.S."/>
            <person name="Hume D.A."/>
            <person name="Kai C."/>
            <person name="Sasaki D."/>
            <person name="Tomaru Y."/>
            <person name="Fukuda S."/>
            <person name="Kanamori-Katayama M."/>
            <person name="Suzuki M."/>
            <person name="Aoki J."/>
            <person name="Arakawa T."/>
            <person name="Iida J."/>
            <person name="Imamura K."/>
            <person name="Itoh M."/>
            <person name="Kato T."/>
            <person name="Kawaji H."/>
            <person name="Kawagashira N."/>
            <person name="Kawashima T."/>
            <person name="Kojima M."/>
            <person name="Kondo S."/>
            <person name="Konno H."/>
            <person name="Nakano K."/>
            <person name="Ninomiya N."/>
            <person name="Nishio T."/>
            <person name="Okada M."/>
            <person name="Plessy C."/>
            <person name="Shibata K."/>
            <person name="Shiraki T."/>
            <person name="Suzuki S."/>
            <person name="Tagami M."/>
            <person name="Waki K."/>
            <person name="Watahiki A."/>
            <person name="Okamura-Oho Y."/>
            <person name="Suzuki H."/>
            <person name="Kawai J."/>
            <person name="Hayashizaki Y."/>
        </authorList>
    </citation>
    <scope>NUCLEOTIDE SEQUENCE [LARGE SCALE MRNA] OF 827-1100 (ISOFORM 1)</scope>
    <source>
        <strain>C57BL/6J</strain>
        <tissue>Embryonic stem cell</tissue>
    </source>
</reference>
<reference key="5">
    <citation type="journal article" date="2004" name="Mol. Cell. Biol.">
        <title>FF domains of CA150 bind transcription and splicing factors through multiple weak interactions.</title>
        <authorList>
            <person name="Smith M.J."/>
            <person name="Kulkarni S."/>
            <person name="Pawson T."/>
        </authorList>
    </citation>
    <scope>INTERACTION WITH HTATSF1</scope>
    <scope>DOMAIN</scope>
</reference>
<reference key="6">
    <citation type="journal article" date="2007" name="J. Biol. Chem.">
        <title>Structure of the dimeric exonuclease TREX1 in complex with DNA displays a proline-rich binding site for WW Domains.</title>
        <authorList>
            <person name="Brucet M."/>
            <person name="Querol-Audi J."/>
            <person name="Serra M."/>
            <person name="Ramirez-Espain X."/>
            <person name="Bertlik K."/>
            <person name="Ruiz L."/>
            <person name="Lloberas J."/>
            <person name="Macias M.J."/>
            <person name="Fita I."/>
            <person name="Celada A."/>
        </authorList>
    </citation>
    <scope>INTERACTION WITH TREX1</scope>
</reference>
<reference key="7">
    <citation type="journal article" date="2010" name="Cell">
        <title>A tissue-specific atlas of mouse protein phosphorylation and expression.</title>
        <authorList>
            <person name="Huttlin E.L."/>
            <person name="Jedrychowski M.P."/>
            <person name="Elias J.E."/>
            <person name="Goswami T."/>
            <person name="Rad R."/>
            <person name="Beausoleil S.A."/>
            <person name="Villen J."/>
            <person name="Haas W."/>
            <person name="Sowa M.E."/>
            <person name="Gygi S.P."/>
        </authorList>
    </citation>
    <scope>IDENTIFICATION BY MASS SPECTROMETRY [LARGE SCALE ANALYSIS]</scope>
    <source>
        <tissue>Brain</tissue>
        <tissue>Brown adipose tissue</tissue>
        <tissue>Heart</tissue>
        <tissue>Kidney</tissue>
        <tissue>Liver</tissue>
        <tissue>Lung</tissue>
        <tissue>Pancreas</tissue>
        <tissue>Spleen</tissue>
        <tissue>Testis</tissue>
    </source>
</reference>
<reference key="8">
    <citation type="journal article" date="2014" name="Mol. Cell. Proteomics">
        <title>Immunoaffinity enrichment and mass spectrometry analysis of protein methylation.</title>
        <authorList>
            <person name="Guo A."/>
            <person name="Gu H."/>
            <person name="Zhou J."/>
            <person name="Mulhern D."/>
            <person name="Wang Y."/>
            <person name="Lee K.A."/>
            <person name="Yang V."/>
            <person name="Aguiar M."/>
            <person name="Kornhauser J."/>
            <person name="Jia X."/>
            <person name="Ren J."/>
            <person name="Beausoleil S.A."/>
            <person name="Silva J.C."/>
            <person name="Vemulapalli V."/>
            <person name="Bedford M.T."/>
            <person name="Comb M.J."/>
        </authorList>
    </citation>
    <scope>METHYLATION [LARGE SCALE ANALYSIS] AT ARG-28; ARG-30 AND ARG-41</scope>
    <scope>IDENTIFICATION BY MASS SPECTROMETRY [LARGE SCALE ANALYSIS]</scope>
    <source>
        <tissue>Embryo</tissue>
    </source>
</reference>
<reference key="9">
    <citation type="journal article" date="2000" name="Nat. Struct. Biol.">
        <title>Structural analysis of WW domains and design of a WW prototype.</title>
        <authorList>
            <person name="Macias M.J."/>
            <person name="Gervais V."/>
            <person name="Civera C."/>
            <person name="Oschkinat H."/>
        </authorList>
    </citation>
    <scope>STRUCTURE BY NMR OF 437-462</scope>
</reference>
<name>TCRG1_MOUSE</name>
<organism>
    <name type="scientific">Mus musculus</name>
    <name type="common">Mouse</name>
    <dbReference type="NCBI Taxonomy" id="10090"/>
    <lineage>
        <taxon>Eukaryota</taxon>
        <taxon>Metazoa</taxon>
        <taxon>Chordata</taxon>
        <taxon>Craniata</taxon>
        <taxon>Vertebrata</taxon>
        <taxon>Euteleostomi</taxon>
        <taxon>Mammalia</taxon>
        <taxon>Eutheria</taxon>
        <taxon>Euarchontoglires</taxon>
        <taxon>Glires</taxon>
        <taxon>Rodentia</taxon>
        <taxon>Myomorpha</taxon>
        <taxon>Muroidea</taxon>
        <taxon>Muridae</taxon>
        <taxon>Murinae</taxon>
        <taxon>Mus</taxon>
        <taxon>Mus</taxon>
    </lineage>
</organism>
<proteinExistence type="evidence at protein level"/>
<dbReference type="EMBL" id="BC039185">
    <property type="protein sequence ID" value="AAH39185.1"/>
    <property type="status" value="ALT_INIT"/>
    <property type="molecule type" value="mRNA"/>
</dbReference>
<dbReference type="EMBL" id="BC040284">
    <property type="protein sequence ID" value="AAH40284.1"/>
    <property type="molecule type" value="mRNA"/>
</dbReference>
<dbReference type="EMBL" id="AB023485">
    <property type="protein sequence ID" value="BAA86392.1"/>
    <property type="molecule type" value="mRNA"/>
</dbReference>
<dbReference type="EMBL" id="U40749">
    <property type="protein sequence ID" value="AAC52477.1"/>
    <property type="molecule type" value="mRNA"/>
</dbReference>
<dbReference type="EMBL" id="AK082750">
    <property type="protein sequence ID" value="BAC38600.1"/>
    <property type="molecule type" value="mRNA"/>
</dbReference>
<dbReference type="CCDS" id="CCDS29214.1">
    <molecule id="Q8CGF7-1"/>
</dbReference>
<dbReference type="CCDS" id="CCDS89230.1">
    <molecule id="Q8CGF7-2"/>
</dbReference>
<dbReference type="PIR" id="S64716">
    <property type="entry name" value="S64716"/>
</dbReference>
<dbReference type="RefSeq" id="NP_001034563.1">
    <molecule id="Q8CGF7-1"/>
    <property type="nucleotide sequence ID" value="NM_001039474.1"/>
</dbReference>
<dbReference type="RefSeq" id="NP_001276455.1">
    <property type="nucleotide sequence ID" value="NM_001289526.1"/>
</dbReference>
<dbReference type="RefSeq" id="NP_001347810.1">
    <molecule id="Q8CGF7-2"/>
    <property type="nucleotide sequence ID" value="NM_001360881.1"/>
</dbReference>
<dbReference type="RefSeq" id="XP_006526178.1">
    <property type="nucleotide sequence ID" value="XM_006526115.3"/>
</dbReference>
<dbReference type="PDB" id="1E0L">
    <property type="method" value="NMR"/>
    <property type="chains" value="A=430-466"/>
</dbReference>
<dbReference type="PDB" id="2JUP">
    <property type="method" value="NMR"/>
    <property type="chains" value="W=430-466"/>
</dbReference>
<dbReference type="PDB" id="2RLY">
    <property type="method" value="NMR"/>
    <property type="chains" value="W=430-466"/>
</dbReference>
<dbReference type="PDB" id="2RM0">
    <property type="method" value="NMR"/>
    <property type="chains" value="W=430-466"/>
</dbReference>
<dbReference type="PDB" id="2YSI">
    <property type="method" value="NMR"/>
    <property type="chains" value="A=133-165"/>
</dbReference>
<dbReference type="PDBsum" id="1E0L"/>
<dbReference type="PDBsum" id="2JUP"/>
<dbReference type="PDBsum" id="2RLY"/>
<dbReference type="PDBsum" id="2RM0"/>
<dbReference type="PDBsum" id="2YSI"/>
<dbReference type="SMR" id="Q8CGF7"/>
<dbReference type="BioGRID" id="207801">
    <property type="interactions" value="24"/>
</dbReference>
<dbReference type="FunCoup" id="Q8CGF7">
    <property type="interactions" value="5809"/>
</dbReference>
<dbReference type="IntAct" id="Q8CGF7">
    <property type="interactions" value="2"/>
</dbReference>
<dbReference type="MINT" id="Q8CGF7"/>
<dbReference type="STRING" id="10090.ENSMUSP00000158288"/>
<dbReference type="GlyGen" id="Q8CGF7">
    <property type="glycosylation" value="5 sites, 1 O-linked glycan (1 site)"/>
</dbReference>
<dbReference type="iPTMnet" id="Q8CGF7"/>
<dbReference type="PhosphoSitePlus" id="Q8CGF7"/>
<dbReference type="SwissPalm" id="Q8CGF7"/>
<dbReference type="PaxDb" id="10090-ENSMUSP00000025375"/>
<dbReference type="PeptideAtlas" id="Q8CGF7"/>
<dbReference type="ProteomicsDB" id="254682">
    <molecule id="Q8CGF7-1"/>
</dbReference>
<dbReference type="ProteomicsDB" id="254683">
    <molecule id="Q8CGF7-2"/>
</dbReference>
<dbReference type="ProteomicsDB" id="254684">
    <molecule id="Q8CGF7-3"/>
</dbReference>
<dbReference type="Pumba" id="Q8CGF7"/>
<dbReference type="Antibodypedia" id="15805">
    <property type="antibodies" value="186 antibodies from 27 providers"/>
</dbReference>
<dbReference type="DNASU" id="56070"/>
<dbReference type="Ensembl" id="ENSMUST00000025375.15">
    <molecule id="Q8CGF7-2"/>
    <property type="protein sequence ID" value="ENSMUSP00000025375.9"/>
    <property type="gene ID" value="ENSMUSG00000024498.17"/>
</dbReference>
<dbReference type="Ensembl" id="ENSMUST00000173642.2">
    <molecule id="Q8CGF7-3"/>
    <property type="protein sequence ID" value="ENSMUSP00000134458.2"/>
    <property type="gene ID" value="ENSMUSG00000024498.17"/>
</dbReference>
<dbReference type="Ensembl" id="ENSMUST00000237602.2">
    <molecule id="Q8CGF7-1"/>
    <property type="protein sequence ID" value="ENSMUSP00000158288.2"/>
    <property type="gene ID" value="ENSMUSG00000024498.17"/>
</dbReference>
<dbReference type="GeneID" id="56070"/>
<dbReference type="KEGG" id="mmu:56070"/>
<dbReference type="UCSC" id="uc008etw.2">
    <molecule id="Q8CGF7-2"/>
    <property type="organism name" value="mouse"/>
</dbReference>
<dbReference type="UCSC" id="uc008etx.1">
    <molecule id="Q8CGF7-1"/>
    <property type="organism name" value="mouse"/>
</dbReference>
<dbReference type="AGR" id="MGI:1926421"/>
<dbReference type="CTD" id="10915"/>
<dbReference type="MGI" id="MGI:1926421">
    <property type="gene designation" value="Tcerg1"/>
</dbReference>
<dbReference type="VEuPathDB" id="HostDB:ENSMUSG00000024498"/>
<dbReference type="eggNOG" id="KOG0155">
    <property type="taxonomic scope" value="Eukaryota"/>
</dbReference>
<dbReference type="GeneTree" id="ENSGT00940000157770"/>
<dbReference type="HOGENOM" id="CLU_008684_0_0_1"/>
<dbReference type="InParanoid" id="Q8CGF7"/>
<dbReference type="OMA" id="MMNGPIG"/>
<dbReference type="OrthoDB" id="63972at2759"/>
<dbReference type="PhylomeDB" id="Q8CGF7"/>
<dbReference type="TreeFam" id="TF317748"/>
<dbReference type="Reactome" id="R-MMU-72163">
    <property type="pathway name" value="mRNA Splicing - Major Pathway"/>
</dbReference>
<dbReference type="BioGRID-ORCS" id="56070">
    <property type="hits" value="8 hits in 81 CRISPR screens"/>
</dbReference>
<dbReference type="ChiTaRS" id="Tcerg1">
    <property type="organism name" value="mouse"/>
</dbReference>
<dbReference type="EvolutionaryTrace" id="Q8CGF7"/>
<dbReference type="PRO" id="PR:Q8CGF7"/>
<dbReference type="Proteomes" id="UP000000589">
    <property type="component" value="Chromosome 18"/>
</dbReference>
<dbReference type="RNAct" id="Q8CGF7">
    <property type="molecule type" value="protein"/>
</dbReference>
<dbReference type="Bgee" id="ENSMUSG00000024498">
    <property type="expression patterns" value="Expressed in embryonic post-anal tail and 204 other cell types or tissues"/>
</dbReference>
<dbReference type="ExpressionAtlas" id="Q8CGF7">
    <property type="expression patterns" value="baseline and differential"/>
</dbReference>
<dbReference type="GO" id="GO:0005654">
    <property type="term" value="C:nucleoplasm"/>
    <property type="evidence" value="ECO:0007669"/>
    <property type="project" value="Ensembl"/>
</dbReference>
<dbReference type="GO" id="GO:0003700">
    <property type="term" value="F:DNA-binding transcription factor activity"/>
    <property type="evidence" value="ECO:0000250"/>
    <property type="project" value="MGI"/>
</dbReference>
<dbReference type="GO" id="GO:0070064">
    <property type="term" value="F:proline-rich region binding"/>
    <property type="evidence" value="ECO:0000314"/>
    <property type="project" value="MGI"/>
</dbReference>
<dbReference type="GO" id="GO:0070063">
    <property type="term" value="F:RNA polymerase binding"/>
    <property type="evidence" value="ECO:0007669"/>
    <property type="project" value="InterPro"/>
</dbReference>
<dbReference type="GO" id="GO:0006351">
    <property type="term" value="P:DNA-templated transcription"/>
    <property type="evidence" value="ECO:0000250"/>
    <property type="project" value="MGI"/>
</dbReference>
<dbReference type="CDD" id="cd00201">
    <property type="entry name" value="WW"/>
    <property type="match status" value="3"/>
</dbReference>
<dbReference type="FunFam" id="1.10.10.440:FF:000005">
    <property type="entry name" value="Transcription elongation regulator 1 (CA150)"/>
    <property type="match status" value="1"/>
</dbReference>
<dbReference type="FunFam" id="1.10.10.440:FF:000006">
    <property type="entry name" value="Transcription elongation regulator 1 (CA150)"/>
    <property type="match status" value="1"/>
</dbReference>
<dbReference type="FunFam" id="1.10.10.440:FF:000008">
    <property type="entry name" value="Transcription elongation regulator 1 (CA150)"/>
    <property type="match status" value="1"/>
</dbReference>
<dbReference type="FunFam" id="1.10.10.440:FF:000010">
    <property type="entry name" value="Transcription elongation regulator 1 (CA150)"/>
    <property type="match status" value="1"/>
</dbReference>
<dbReference type="FunFam" id="2.20.70.10:FF:000010">
    <property type="entry name" value="Transcription elongation regulator 1 (CA150)"/>
    <property type="match status" value="1"/>
</dbReference>
<dbReference type="FunFam" id="2.20.70.10:FF:000015">
    <property type="entry name" value="Transcription elongation regulator 1 (CA150)"/>
    <property type="match status" value="1"/>
</dbReference>
<dbReference type="FunFam" id="2.20.70.10:FF:000016">
    <property type="entry name" value="Transcription elongation regulator 1 (CA150)"/>
    <property type="match status" value="1"/>
</dbReference>
<dbReference type="FunFam" id="1.10.10.440:FF:000001">
    <property type="entry name" value="Transcription elongation regulator 1 like"/>
    <property type="match status" value="1"/>
</dbReference>
<dbReference type="FunFam" id="1.10.10.440:FF:000004">
    <property type="entry name" value="Transcription elongation regulator 1 like"/>
    <property type="match status" value="1"/>
</dbReference>
<dbReference type="Gene3D" id="2.20.70.10">
    <property type="match status" value="3"/>
</dbReference>
<dbReference type="Gene3D" id="1.10.10.440">
    <property type="entry name" value="FF domain"/>
    <property type="match status" value="6"/>
</dbReference>
<dbReference type="InterPro" id="IPR002713">
    <property type="entry name" value="FF_domain"/>
</dbReference>
<dbReference type="InterPro" id="IPR036517">
    <property type="entry name" value="FF_domain_sf"/>
</dbReference>
<dbReference type="InterPro" id="IPR045148">
    <property type="entry name" value="TCRG1-like"/>
</dbReference>
<dbReference type="InterPro" id="IPR001202">
    <property type="entry name" value="WW_dom"/>
</dbReference>
<dbReference type="InterPro" id="IPR036020">
    <property type="entry name" value="WW_dom_sf"/>
</dbReference>
<dbReference type="PANTHER" id="PTHR15377">
    <property type="entry name" value="TRANSCRIPTION ELONGATION REGULATOR 1"/>
    <property type="match status" value="1"/>
</dbReference>
<dbReference type="PANTHER" id="PTHR15377:SF7">
    <property type="entry name" value="TRANSCRIPTION ELONGATION REGULATOR 1"/>
    <property type="match status" value="1"/>
</dbReference>
<dbReference type="Pfam" id="PF01846">
    <property type="entry name" value="FF"/>
    <property type="match status" value="6"/>
</dbReference>
<dbReference type="Pfam" id="PF00397">
    <property type="entry name" value="WW"/>
    <property type="match status" value="2"/>
</dbReference>
<dbReference type="Pfam" id="PF23517">
    <property type="entry name" value="WW_TCERG1"/>
    <property type="match status" value="1"/>
</dbReference>
<dbReference type="SMART" id="SM00441">
    <property type="entry name" value="FF"/>
    <property type="match status" value="6"/>
</dbReference>
<dbReference type="SMART" id="SM00456">
    <property type="entry name" value="WW"/>
    <property type="match status" value="3"/>
</dbReference>
<dbReference type="SUPFAM" id="SSF81698">
    <property type="entry name" value="FF domain"/>
    <property type="match status" value="5"/>
</dbReference>
<dbReference type="SUPFAM" id="SSF51045">
    <property type="entry name" value="WW domain"/>
    <property type="match status" value="3"/>
</dbReference>
<dbReference type="PROSITE" id="PS51676">
    <property type="entry name" value="FF"/>
    <property type="match status" value="6"/>
</dbReference>
<dbReference type="PROSITE" id="PS01159">
    <property type="entry name" value="WW_DOMAIN_1"/>
    <property type="match status" value="1"/>
</dbReference>
<dbReference type="PROSITE" id="PS50020">
    <property type="entry name" value="WW_DOMAIN_2"/>
    <property type="match status" value="3"/>
</dbReference>
<feature type="chain" id="PRO_0000076064" description="Transcription elongation regulator 1">
    <location>
        <begin position="1"/>
        <end position="1100"/>
    </location>
</feature>
<feature type="domain" description="WW 1" evidence="4">
    <location>
        <begin position="131"/>
        <end position="164"/>
    </location>
</feature>
<feature type="domain" description="WW 2" evidence="4">
    <location>
        <begin position="431"/>
        <end position="464"/>
    </location>
</feature>
<feature type="domain" description="WW 3" evidence="4">
    <location>
        <begin position="530"/>
        <end position="563"/>
    </location>
</feature>
<feature type="domain" description="FF 1">
    <location>
        <begin position="661"/>
        <end position="714"/>
    </location>
</feature>
<feature type="domain" description="FF 2">
    <location>
        <begin position="727"/>
        <end position="781"/>
    </location>
</feature>
<feature type="domain" description="FF 3">
    <location>
        <begin position="793"/>
        <end position="848"/>
    </location>
</feature>
<feature type="domain" description="FF 4">
    <location>
        <begin position="898"/>
        <end position="954"/>
    </location>
</feature>
<feature type="domain" description="FF 5">
    <location>
        <begin position="956"/>
        <end position="1012"/>
    </location>
</feature>
<feature type="domain" description="FF 6">
    <location>
        <begin position="1014"/>
        <end position="1079"/>
    </location>
</feature>
<feature type="region of interest" description="Disordered" evidence="5">
    <location>
        <begin position="1"/>
        <end position="90"/>
    </location>
</feature>
<feature type="region of interest" description="Disordered" evidence="5">
    <location>
        <begin position="258"/>
        <end position="332"/>
    </location>
</feature>
<feature type="region of interest" description="Disordered" evidence="5">
    <location>
        <begin position="461"/>
        <end position="528"/>
    </location>
</feature>
<feature type="region of interest" description="Disordered" evidence="5">
    <location>
        <begin position="616"/>
        <end position="642"/>
    </location>
</feature>
<feature type="region of interest" description="Disordered" evidence="5">
    <location>
        <begin position="872"/>
        <end position="897"/>
    </location>
</feature>
<feature type="region of interest" description="Disordered" evidence="5">
    <location>
        <begin position="1078"/>
        <end position="1100"/>
    </location>
</feature>
<feature type="coiled-coil region" evidence="3">
    <location>
        <begin position="184"/>
        <end position="254"/>
    </location>
</feature>
<feature type="coiled-coil region" evidence="3">
    <location>
        <begin position="607"/>
        <end position="657"/>
    </location>
</feature>
<feature type="coiled-coil region" evidence="3">
    <location>
        <begin position="846"/>
        <end position="908"/>
    </location>
</feature>
<feature type="short sequence motif" description="Nuclear localization signal" evidence="3">
    <location>
        <begin position="628"/>
        <end position="632"/>
    </location>
</feature>
<feature type="compositionally biased region" description="Basic and acidic residues" evidence="5">
    <location>
        <begin position="1"/>
        <end position="15"/>
    </location>
</feature>
<feature type="compositionally biased region" description="Pro residues" evidence="5">
    <location>
        <begin position="32"/>
        <end position="90"/>
    </location>
</feature>
<feature type="compositionally biased region" description="Basic and acidic residues" evidence="5">
    <location>
        <begin position="461"/>
        <end position="483"/>
    </location>
</feature>
<feature type="compositionally biased region" description="Basic and acidic residues" evidence="5">
    <location>
        <begin position="498"/>
        <end position="508"/>
    </location>
</feature>
<feature type="compositionally biased region" description="Basic and acidic residues" evidence="5">
    <location>
        <begin position="632"/>
        <end position="642"/>
    </location>
</feature>
<feature type="modified residue" description="Omega-N-methylarginine" evidence="2">
    <location>
        <position position="20"/>
    </location>
</feature>
<feature type="modified residue" description="Asymmetric dimethylarginine" evidence="13">
    <location>
        <position position="28"/>
    </location>
</feature>
<feature type="modified residue" description="Asymmetric dimethylarginine" evidence="13">
    <location>
        <position position="30"/>
    </location>
</feature>
<feature type="modified residue" description="Asymmetric dimethylarginine" evidence="13">
    <location>
        <position position="41"/>
    </location>
</feature>
<feature type="modified residue" description="Asymmetric dimethylarginine" evidence="2">
    <location>
        <position position="48"/>
    </location>
</feature>
<feature type="modified residue" description="Phosphoserine" evidence="2">
    <location>
        <position position="640"/>
    </location>
</feature>
<feature type="modified residue" description="Phosphoserine" evidence="2">
    <location>
        <position position="836"/>
    </location>
</feature>
<feature type="modified residue" description="Phosphoserine" evidence="2">
    <location>
        <position position="935"/>
    </location>
</feature>
<feature type="cross-link" description="Glycyl lysine isopeptide (Lys-Gly) (interchain with G-Cter in SUMO2)" evidence="2">
    <location>
        <position position="505"/>
    </location>
</feature>
<feature type="cross-link" description="Glycyl lysine isopeptide (Lys-Gly) (interchain with G-Cter in SUMO2)" evidence="2">
    <location>
        <position position="509"/>
    </location>
</feature>
<feature type="cross-link" description="Glycyl lysine isopeptide (Lys-Gly) (interchain with G-Cter in SUMO2)" evidence="2">
    <location>
        <position position="610"/>
    </location>
</feature>
<feature type="splice variant" id="VSP_011655" description="In isoform 2." evidence="11">
    <location>
        <begin position="381"/>
        <end position="401"/>
    </location>
</feature>
<feature type="splice variant" id="VSP_011656" description="In isoform 3." evidence="10">
    <original>R</original>
    <variation>S</variation>
    <location>
        <position position="1034"/>
    </location>
</feature>
<feature type="splice variant" id="VSP_011657" description="In isoform 3." evidence="10">
    <location>
        <begin position="1035"/>
        <end position="1100"/>
    </location>
</feature>
<feature type="sequence variant" evidence="7">
    <location>
        <begin position="184"/>
        <end position="185"/>
    </location>
</feature>
<feature type="sequence conflict" description="In Ref. 1; BAA86392." evidence="12" ref="1">
    <original>R</original>
    <variation>H</variation>
    <location>
        <position position="4"/>
    </location>
</feature>
<feature type="sequence conflict" description="In Ref. 1; BAA86392." evidence="12" ref="1">
    <original>R</original>
    <variation>G</variation>
    <location>
        <position position="30"/>
    </location>
</feature>
<feature type="sequence conflict" description="In Ref. 2; AAH39185." evidence="12" ref="2">
    <original>R</original>
    <variation>I</variation>
    <location>
        <position position="48"/>
    </location>
</feature>
<feature type="strand" evidence="16">
    <location>
        <begin position="136"/>
        <end position="141"/>
    </location>
</feature>
<feature type="strand" evidence="16">
    <location>
        <begin position="147"/>
        <end position="151"/>
    </location>
</feature>
<feature type="turn" evidence="16">
    <location>
        <begin position="152"/>
        <end position="154"/>
    </location>
</feature>
<feature type="strand" evidence="16">
    <location>
        <begin position="157"/>
        <end position="160"/>
    </location>
</feature>
<feature type="strand" evidence="14">
    <location>
        <begin position="432"/>
        <end position="434"/>
    </location>
</feature>
<feature type="strand" evidence="14">
    <location>
        <begin position="438"/>
        <end position="441"/>
    </location>
</feature>
<feature type="turn" evidence="15">
    <location>
        <begin position="443"/>
        <end position="445"/>
    </location>
</feature>
<feature type="strand" evidence="14">
    <location>
        <begin position="447"/>
        <end position="451"/>
    </location>
</feature>
<feature type="turn" evidence="14">
    <location>
        <begin position="452"/>
        <end position="455"/>
    </location>
</feature>
<feature type="strand" evidence="14">
    <location>
        <begin position="456"/>
        <end position="460"/>
    </location>
</feature>
<sequence>MAERGGDGGEGERFNPGELRMAQQQALRFRGPAPPPNAVMRGPPPLMRPPPPFGMMRGPPPPPRPPFGRPPFDPNMPPMPPPGGIPPPMGPPHLQRPPFMPPPMGAMPPPPGMMFPPGMPPGTAPGAPALPPTEEIWVENKTPDGKVYYYNARTRESAWTKPDGVKVIQQSELTPMLAAQAQVQAQAQAQAQAQAQAQAQAQAQAQAQAQAQAQAQAQAQAQAQAQAQAQAQAQAQAQAQAQAQAQAQAQAQVQAQAVGAPTPTTSSPAPAVSTSTPTSTPSSTTATTTTATSVAQTVSTPTTQDQTPSSAVSVATPTVSVSAPAPTATPVQTVPQPHPQTLPPAVPHSVPQPAAAIPAFPPVMVPPFRVPLPGMPIPLPGVAMMQIVSCPYVKTVATTKTGVLPGMAPPIVPMIHPQVAIAASPATLAGATAVSEWTEYKTADGKTYYYNNRTLESTWEKPQELKEKEKLDEKIKEPIKEASEEPLPMETEEEDPKEEPVKEIKEEPKEEEMTEEEKAAQKAKPVATTPIPGTPWCVVWTGDERVFFYNPTTRLSMWDRPDDLIGRADVDKIIQEPPHKKGLEDMKKLRHPAPTMLSIQKWQFSMSAIKEEQELMEEMNEDEPIKAKKRKRDDNKDIDSEKEAAMEAEIKAARERAIVPLEARMKQFKDMLLERGVSAFSTWEKELHKIVFDPRYLLLNPKERKQVFDQYVKTRAEEERREKKNKIMQAKEDFKKMMEEAKFNPRATFSEFAAKHAKDSRFKAIEKMKDREALFNEFVAAARKKEKEDSKTRGEKIKSDFFELLSNHHLDSQSRWSKVKDKVESDPRYKAVDSSSMREDLFKQYIEKIAKNLDSEKEKELERQARIEASLREREREVQKARSEQTKEIDREREQHKREEAIQNFKALLSDMVRSSDVSWSDTRRTLRKDHRWESGSLLEREEKEKLFNEHIEALTKKKREHFRQLLDETSAITLTSTWKEVKKIIKEDPRCIKFSSSDRKKQREFEEYIRDKYITAKADFRTLLKETKFITYRSKKLIQESDQHLKDVEKILQNDKRYLVLDCVPEERRKLIVAYVDDLDRRGPPPPPTASEPTRRSTK</sequence>
<protein>
    <recommendedName>
        <fullName>Transcription elongation regulator 1</fullName>
    </recommendedName>
    <alternativeName>
        <fullName>Formin-binding protein 28</fullName>
        <shortName>FBP 28</shortName>
    </alternativeName>
    <alternativeName>
        <fullName>TATA box-binding protein-associated factor 2S</fullName>
    </alternativeName>
    <alternativeName>
        <fullName>Transcription factor CA150</fullName>
    </alternativeName>
    <alternativeName>
        <fullName>p144</fullName>
    </alternativeName>
</protein>
<accession>Q8CGF7</accession>
<accession>Q61051</accession>
<accession>Q8C490</accession>
<accession>Q8CHT8</accession>
<accession>Q9R0R5</accession>
<keyword id="KW-0002">3D-structure</keyword>
<keyword id="KW-0025">Alternative splicing</keyword>
<keyword id="KW-0175">Coiled coil</keyword>
<keyword id="KW-1017">Isopeptide bond</keyword>
<keyword id="KW-0488">Methylation</keyword>
<keyword id="KW-0539">Nucleus</keyword>
<keyword id="KW-0597">Phosphoprotein</keyword>
<keyword id="KW-1185">Reference proteome</keyword>
<keyword id="KW-0677">Repeat</keyword>
<keyword id="KW-0678">Repressor</keyword>
<keyword id="KW-0804">Transcription</keyword>
<keyword id="KW-0805">Transcription regulation</keyword>
<keyword id="KW-0832">Ubl conjugation</keyword>
<comment type="function">
    <text evidence="1">Transcription factor that binds RNA polymerase II and inhibits the elongation of transcripts from target promoters. Regulates transcription elongation in a TATA box-dependent manner (By similarity).</text>
</comment>
<comment type="subunit">
    <text evidence="1 6 8 9">Binds RNA polymerase II, HD and SF1 (By similarity). Binds formin. Interacts (via the second WW domain) with TREX1 (via proline-rich region).</text>
</comment>
<comment type="subcellular location">
    <subcellularLocation>
        <location evidence="1">Nucleus</location>
    </subcellularLocation>
</comment>
<comment type="alternative products">
    <event type="alternative splicing"/>
    <isoform>
        <id>Q8CGF7-1</id>
        <name>1</name>
        <name>CA150a</name>
        <sequence type="displayed"/>
    </isoform>
    <isoform>
        <id>Q8CGF7-2</id>
        <name>2</name>
        <sequence type="described" ref="VSP_011655"/>
    </isoform>
    <isoform>
        <id>Q8CGF7-3</id>
        <name>3</name>
        <name>CA150b</name>
        <sequence type="described" ref="VSP_011656 VSP_011657"/>
    </isoform>
</comment>
<comment type="domain">
    <text evidence="6">The FF domains preferentially binds peptides with the consensus sequence [DE](2-5)-[FWY]-[DE](2-5) and mediate interaction with HTATSF1 and probably bind the phosphorylated C-terminus of the largest subunit of RNA polymerase II.</text>
</comment>
<comment type="domain">
    <text evidence="6">The WW domains bind Pro-rich domains.</text>
</comment>
<comment type="sequence caution" evidence="12">
    <conflict type="erroneous initiation">
        <sequence resource="EMBL-CDS" id="AAH39185"/>
    </conflict>
</comment>
<gene>
    <name type="primary">Tcerg1</name>
    <name type="synonym">Taf2s</name>
</gene>
<evidence type="ECO:0000250" key="1"/>
<evidence type="ECO:0000250" key="2">
    <source>
        <dbReference type="UniProtKB" id="O14776"/>
    </source>
</evidence>
<evidence type="ECO:0000255" key="3"/>
<evidence type="ECO:0000255" key="4">
    <source>
        <dbReference type="PROSITE-ProRule" id="PRU00224"/>
    </source>
</evidence>
<evidence type="ECO:0000256" key="5">
    <source>
        <dbReference type="SAM" id="MobiDB-lite"/>
    </source>
</evidence>
<evidence type="ECO:0000269" key="6">
    <source>
    </source>
</evidence>
<evidence type="ECO:0000269" key="7">
    <source>
    </source>
</evidence>
<evidence type="ECO:0000269" key="8">
    <source>
    </source>
</evidence>
<evidence type="ECO:0000269" key="9">
    <source>
    </source>
</evidence>
<evidence type="ECO:0000303" key="10">
    <source>
    </source>
</evidence>
<evidence type="ECO:0000303" key="11">
    <source>
    </source>
</evidence>
<evidence type="ECO:0000305" key="12"/>
<evidence type="ECO:0007744" key="13">
    <source>
    </source>
</evidence>
<evidence type="ECO:0007829" key="14">
    <source>
        <dbReference type="PDB" id="1E0L"/>
    </source>
</evidence>
<evidence type="ECO:0007829" key="15">
    <source>
        <dbReference type="PDB" id="2RM0"/>
    </source>
</evidence>
<evidence type="ECO:0007829" key="16">
    <source>
        <dbReference type="PDB" id="2YSI"/>
    </source>
</evidence>